<sequence>MNDLIINHIAELILPKSTDKPLKGKELDELNVVKNGTVVIKDGKIVYAGQHTDDYDATETIDASGKVVSPALVDAHTHLTFGGSREHEMSLKRQGKSYLEILEMGGGILSTVNATRETSEDDLFKKAEHDLLTMIKHGVLAVESKSGYGLDRENELKQLKVSNRLAEKYDLDMKHTFLGPHAVPKEASSNEAFLEEMIALLPEVKQYADFADIFCETGVFTIEQSQHYMQKAKEAGFKVKIHADEIDPLGGLELAIDEQAISADHLVASSDKGKEKLRNSDTVAVLLPATTFYLGKEDYADARGMLDNNGAIALATDYNPGSSVTNNLQLVMAIAALKLKLSPSEVWNAVTVNAAKAIDINAGTINTGDKANLVIWDAPNHEYIPYHFGINHAEKVIKDGKVIVDNTLSFKA</sequence>
<comment type="function">
    <text evidence="1">Catalyzes the hydrolytic cleavage of the carbon-nitrogen bond in imidazolone-5-propanoate to yield N-formimidoyl-L-glutamate. It is the third step in the universal histidine degradation pathway.</text>
</comment>
<comment type="catalytic activity">
    <reaction evidence="1">
        <text>4-imidazolone-5-propanoate + H2O = N-formimidoyl-L-glutamate</text>
        <dbReference type="Rhea" id="RHEA:23660"/>
        <dbReference type="ChEBI" id="CHEBI:15377"/>
        <dbReference type="ChEBI" id="CHEBI:58928"/>
        <dbReference type="ChEBI" id="CHEBI:77893"/>
        <dbReference type="EC" id="3.5.2.7"/>
    </reaction>
</comment>
<comment type="cofactor">
    <cofactor evidence="1">
        <name>Zn(2+)</name>
        <dbReference type="ChEBI" id="CHEBI:29105"/>
    </cofactor>
    <cofactor evidence="1">
        <name>Fe(3+)</name>
        <dbReference type="ChEBI" id="CHEBI:29034"/>
    </cofactor>
    <text evidence="1">Binds 1 zinc or iron ion per subunit.</text>
</comment>
<comment type="pathway">
    <text evidence="1">Amino-acid degradation; L-histidine degradation into L-glutamate; N-formimidoyl-L-glutamate from L-histidine: step 3/3.</text>
</comment>
<comment type="subcellular location">
    <subcellularLocation>
        <location evidence="1">Cytoplasm</location>
    </subcellularLocation>
</comment>
<comment type="similarity">
    <text evidence="1">Belongs to the metallo-dependent hydrolases superfamily. HutI family.</text>
</comment>
<accession>A6U455</accession>
<gene>
    <name evidence="1" type="primary">hutI</name>
    <name type="ordered locus">SaurJH1_2398</name>
</gene>
<feature type="chain" id="PRO_1000079832" description="Imidazolonepropionase">
    <location>
        <begin position="1"/>
        <end position="412"/>
    </location>
</feature>
<feature type="binding site" evidence="1">
    <location>
        <position position="76"/>
    </location>
    <ligand>
        <name>Fe(3+)</name>
        <dbReference type="ChEBI" id="CHEBI:29034"/>
    </ligand>
</feature>
<feature type="binding site" evidence="1">
    <location>
        <position position="76"/>
    </location>
    <ligand>
        <name>Zn(2+)</name>
        <dbReference type="ChEBI" id="CHEBI:29105"/>
    </ligand>
</feature>
<feature type="binding site" evidence="1">
    <location>
        <position position="78"/>
    </location>
    <ligand>
        <name>Fe(3+)</name>
        <dbReference type="ChEBI" id="CHEBI:29034"/>
    </ligand>
</feature>
<feature type="binding site" evidence="1">
    <location>
        <position position="78"/>
    </location>
    <ligand>
        <name>Zn(2+)</name>
        <dbReference type="ChEBI" id="CHEBI:29105"/>
    </ligand>
</feature>
<feature type="binding site" evidence="1">
    <location>
        <position position="85"/>
    </location>
    <ligand>
        <name>4-imidazolone-5-propanoate</name>
        <dbReference type="ChEBI" id="CHEBI:77893"/>
    </ligand>
</feature>
<feature type="binding site" evidence="1">
    <location>
        <position position="148"/>
    </location>
    <ligand>
        <name>4-imidazolone-5-propanoate</name>
        <dbReference type="ChEBI" id="CHEBI:77893"/>
    </ligand>
</feature>
<feature type="binding site" evidence="1">
    <location>
        <position position="148"/>
    </location>
    <ligand>
        <name>N-formimidoyl-L-glutamate</name>
        <dbReference type="ChEBI" id="CHEBI:58928"/>
    </ligand>
</feature>
<feature type="binding site" evidence="1">
    <location>
        <position position="181"/>
    </location>
    <ligand>
        <name>4-imidazolone-5-propanoate</name>
        <dbReference type="ChEBI" id="CHEBI:77893"/>
    </ligand>
</feature>
<feature type="binding site" evidence="1">
    <location>
        <position position="242"/>
    </location>
    <ligand>
        <name>Fe(3+)</name>
        <dbReference type="ChEBI" id="CHEBI:29034"/>
    </ligand>
</feature>
<feature type="binding site" evidence="1">
    <location>
        <position position="242"/>
    </location>
    <ligand>
        <name>Zn(2+)</name>
        <dbReference type="ChEBI" id="CHEBI:29105"/>
    </ligand>
</feature>
<feature type="binding site" evidence="1">
    <location>
        <position position="245"/>
    </location>
    <ligand>
        <name>4-imidazolone-5-propanoate</name>
        <dbReference type="ChEBI" id="CHEBI:77893"/>
    </ligand>
</feature>
<feature type="binding site" evidence="1">
    <location>
        <position position="317"/>
    </location>
    <ligand>
        <name>Fe(3+)</name>
        <dbReference type="ChEBI" id="CHEBI:29034"/>
    </ligand>
</feature>
<feature type="binding site" evidence="1">
    <location>
        <position position="317"/>
    </location>
    <ligand>
        <name>Zn(2+)</name>
        <dbReference type="ChEBI" id="CHEBI:29105"/>
    </ligand>
</feature>
<feature type="binding site" evidence="1">
    <location>
        <position position="319"/>
    </location>
    <ligand>
        <name>N-formimidoyl-L-glutamate</name>
        <dbReference type="ChEBI" id="CHEBI:58928"/>
    </ligand>
</feature>
<feature type="binding site" evidence="1">
    <location>
        <position position="321"/>
    </location>
    <ligand>
        <name>N-formimidoyl-L-glutamate</name>
        <dbReference type="ChEBI" id="CHEBI:58928"/>
    </ligand>
</feature>
<feature type="binding site" evidence="1">
    <location>
        <position position="322"/>
    </location>
    <ligand>
        <name>4-imidazolone-5-propanoate</name>
        <dbReference type="ChEBI" id="CHEBI:77893"/>
    </ligand>
</feature>
<protein>
    <recommendedName>
        <fullName evidence="1">Imidazolonepropionase</fullName>
        <ecNumber evidence="1">3.5.2.7</ecNumber>
    </recommendedName>
    <alternativeName>
        <fullName evidence="1">Imidazolone-5-propionate hydrolase</fullName>
    </alternativeName>
</protein>
<name>HUTI_STAA2</name>
<reference key="1">
    <citation type="submission" date="2007-06" db="EMBL/GenBank/DDBJ databases">
        <title>Complete sequence of chromosome of Staphylococcus aureus subsp. aureus JH1.</title>
        <authorList>
            <consortium name="US DOE Joint Genome Institute"/>
            <person name="Copeland A."/>
            <person name="Lucas S."/>
            <person name="Lapidus A."/>
            <person name="Barry K."/>
            <person name="Detter J.C."/>
            <person name="Glavina del Rio T."/>
            <person name="Hammon N."/>
            <person name="Israni S."/>
            <person name="Dalin E."/>
            <person name="Tice H."/>
            <person name="Pitluck S."/>
            <person name="Chain P."/>
            <person name="Malfatti S."/>
            <person name="Shin M."/>
            <person name="Vergez L."/>
            <person name="Schmutz J."/>
            <person name="Larimer F."/>
            <person name="Land M."/>
            <person name="Hauser L."/>
            <person name="Kyrpides N."/>
            <person name="Ivanova N."/>
            <person name="Tomasz A."/>
            <person name="Richardson P."/>
        </authorList>
    </citation>
    <scope>NUCLEOTIDE SEQUENCE [LARGE SCALE GENOMIC DNA]</scope>
    <source>
        <strain>JH1</strain>
    </source>
</reference>
<proteinExistence type="inferred from homology"/>
<evidence type="ECO:0000255" key="1">
    <source>
        <dbReference type="HAMAP-Rule" id="MF_00372"/>
    </source>
</evidence>
<dbReference type="EC" id="3.5.2.7" evidence="1"/>
<dbReference type="EMBL" id="CP000736">
    <property type="protein sequence ID" value="ABR53223.1"/>
    <property type="molecule type" value="Genomic_DNA"/>
</dbReference>
<dbReference type="SMR" id="A6U455"/>
<dbReference type="KEGG" id="sah:SaurJH1_2398"/>
<dbReference type="HOGENOM" id="CLU_041647_0_1_9"/>
<dbReference type="UniPathway" id="UPA00379">
    <property type="reaction ID" value="UER00551"/>
</dbReference>
<dbReference type="GO" id="GO:0005737">
    <property type="term" value="C:cytoplasm"/>
    <property type="evidence" value="ECO:0007669"/>
    <property type="project" value="UniProtKB-SubCell"/>
</dbReference>
<dbReference type="GO" id="GO:0050480">
    <property type="term" value="F:imidazolonepropionase activity"/>
    <property type="evidence" value="ECO:0007669"/>
    <property type="project" value="UniProtKB-UniRule"/>
</dbReference>
<dbReference type="GO" id="GO:0005506">
    <property type="term" value="F:iron ion binding"/>
    <property type="evidence" value="ECO:0007669"/>
    <property type="project" value="UniProtKB-UniRule"/>
</dbReference>
<dbReference type="GO" id="GO:0008270">
    <property type="term" value="F:zinc ion binding"/>
    <property type="evidence" value="ECO:0007669"/>
    <property type="project" value="UniProtKB-UniRule"/>
</dbReference>
<dbReference type="GO" id="GO:0019556">
    <property type="term" value="P:L-histidine catabolic process to glutamate and formamide"/>
    <property type="evidence" value="ECO:0007669"/>
    <property type="project" value="UniProtKB-UniPathway"/>
</dbReference>
<dbReference type="GO" id="GO:0019557">
    <property type="term" value="P:L-histidine catabolic process to glutamate and formate"/>
    <property type="evidence" value="ECO:0007669"/>
    <property type="project" value="UniProtKB-UniPathway"/>
</dbReference>
<dbReference type="CDD" id="cd01296">
    <property type="entry name" value="Imidazolone-5PH"/>
    <property type="match status" value="1"/>
</dbReference>
<dbReference type="FunFam" id="3.20.20.140:FF:000007">
    <property type="entry name" value="Imidazolonepropionase"/>
    <property type="match status" value="1"/>
</dbReference>
<dbReference type="Gene3D" id="3.20.20.140">
    <property type="entry name" value="Metal-dependent hydrolases"/>
    <property type="match status" value="1"/>
</dbReference>
<dbReference type="Gene3D" id="2.30.40.10">
    <property type="entry name" value="Urease, subunit C, domain 1"/>
    <property type="match status" value="1"/>
</dbReference>
<dbReference type="HAMAP" id="MF_00372">
    <property type="entry name" value="HutI"/>
    <property type="match status" value="1"/>
</dbReference>
<dbReference type="InterPro" id="IPR006680">
    <property type="entry name" value="Amidohydro-rel"/>
</dbReference>
<dbReference type="InterPro" id="IPR005920">
    <property type="entry name" value="HutI"/>
</dbReference>
<dbReference type="InterPro" id="IPR011059">
    <property type="entry name" value="Metal-dep_hydrolase_composite"/>
</dbReference>
<dbReference type="InterPro" id="IPR032466">
    <property type="entry name" value="Metal_Hydrolase"/>
</dbReference>
<dbReference type="NCBIfam" id="TIGR01224">
    <property type="entry name" value="hutI"/>
    <property type="match status" value="1"/>
</dbReference>
<dbReference type="PANTHER" id="PTHR42752">
    <property type="entry name" value="IMIDAZOLONEPROPIONASE"/>
    <property type="match status" value="1"/>
</dbReference>
<dbReference type="PANTHER" id="PTHR42752:SF1">
    <property type="entry name" value="IMIDAZOLONEPROPIONASE-RELATED"/>
    <property type="match status" value="1"/>
</dbReference>
<dbReference type="Pfam" id="PF01979">
    <property type="entry name" value="Amidohydro_1"/>
    <property type="match status" value="1"/>
</dbReference>
<dbReference type="SUPFAM" id="SSF51338">
    <property type="entry name" value="Composite domain of metallo-dependent hydrolases"/>
    <property type="match status" value="1"/>
</dbReference>
<dbReference type="SUPFAM" id="SSF51556">
    <property type="entry name" value="Metallo-dependent hydrolases"/>
    <property type="match status" value="1"/>
</dbReference>
<organism>
    <name type="scientific">Staphylococcus aureus (strain JH1)</name>
    <dbReference type="NCBI Taxonomy" id="359787"/>
    <lineage>
        <taxon>Bacteria</taxon>
        <taxon>Bacillati</taxon>
        <taxon>Bacillota</taxon>
        <taxon>Bacilli</taxon>
        <taxon>Bacillales</taxon>
        <taxon>Staphylococcaceae</taxon>
        <taxon>Staphylococcus</taxon>
    </lineage>
</organism>
<keyword id="KW-0963">Cytoplasm</keyword>
<keyword id="KW-0369">Histidine metabolism</keyword>
<keyword id="KW-0378">Hydrolase</keyword>
<keyword id="KW-0408">Iron</keyword>
<keyword id="KW-0479">Metal-binding</keyword>
<keyword id="KW-0862">Zinc</keyword>